<reference key="1">
    <citation type="journal article" date="1997" name="Eur. J. Immunol.">
        <title>Conservation of a master hematopoietic switch gene during vertebrate evolution: isolation and characterization of Ikaros from teleost and amphibian species.</title>
        <authorList>
            <person name="Hansen J.D."/>
            <person name="Strassburger P."/>
            <person name="du Pasquier L."/>
        </authorList>
    </citation>
    <scope>NUCLEOTIDE SEQUENCE [MRNA] (ISOFORMS IK-1; IK-2; IK-3; IK-4; IK-5; IK-6; IK-7 AND IK-8)</scope>
    <scope>TISSUE SPECIFICITY</scope>
    <scope>DEVELOPMENTAL STAGE</scope>
    <scope>SUBCELLULAR LOCATION</scope>
    <source>
        <strain>Shasta</strain>
        <tissue>Thymocyte</tissue>
    </source>
</reference>
<organism>
    <name type="scientific">Oncorhynchus mykiss</name>
    <name type="common">Rainbow trout</name>
    <name type="synonym">Salmo gairdneri</name>
    <dbReference type="NCBI Taxonomy" id="8022"/>
    <lineage>
        <taxon>Eukaryota</taxon>
        <taxon>Metazoa</taxon>
        <taxon>Chordata</taxon>
        <taxon>Craniata</taxon>
        <taxon>Vertebrata</taxon>
        <taxon>Euteleostomi</taxon>
        <taxon>Actinopterygii</taxon>
        <taxon>Neopterygii</taxon>
        <taxon>Teleostei</taxon>
        <taxon>Protacanthopterygii</taxon>
        <taxon>Salmoniformes</taxon>
        <taxon>Salmonidae</taxon>
        <taxon>Salmoninae</taxon>
        <taxon>Oncorhynchus</taxon>
    </lineage>
</organism>
<evidence type="ECO:0000250" key="1">
    <source>
        <dbReference type="UniProtKB" id="Q03267"/>
    </source>
</evidence>
<evidence type="ECO:0000250" key="2">
    <source>
        <dbReference type="UniProtKB" id="Q13422"/>
    </source>
</evidence>
<evidence type="ECO:0000255" key="3">
    <source>
        <dbReference type="PROSITE-ProRule" id="PRU00042"/>
    </source>
</evidence>
<evidence type="ECO:0000256" key="4">
    <source>
        <dbReference type="SAM" id="MobiDB-lite"/>
    </source>
</evidence>
<evidence type="ECO:0000269" key="5">
    <source>
    </source>
</evidence>
<evidence type="ECO:0000303" key="6">
    <source>
    </source>
</evidence>
<evidence type="ECO:0000305" key="7"/>
<comment type="function">
    <text evidence="1 2">Binds and activates the enhancer (delta-A element) of the CD3-delta gene. Functions in the specification and the maturation of the T-lymphocyte. Also interacts with a critical control element in the TDT (terminal deoxynucleotidyltransferase) promoter as well as with the promoters for other genes expressed during early stages of B- and T-cell development. Function is isoform-specific and is modulated by dominant-negative inactive isoforms (By similarity).</text>
</comment>
<comment type="subcellular location">
    <subcellularLocation>
        <location evidence="5">Nucleus</location>
    </subcellularLocation>
</comment>
<comment type="alternative products">
    <event type="alternative splicing"/>
    <isoform>
        <id>O13089-1</id>
        <name>IK-1</name>
        <sequence type="displayed"/>
    </isoform>
    <isoform>
        <id>O13089-2</id>
        <name>IK-2</name>
        <sequence type="described" ref="VSP_006857"/>
    </isoform>
    <isoform>
        <id>O13089-3</id>
        <name>IK-3</name>
        <sequence type="described" ref="VSP_006861"/>
    </isoform>
    <isoform>
        <id>O13089-4</id>
        <name>IK-4</name>
        <sequence type="described" ref="VSP_006857 VSP_006860"/>
    </isoform>
    <isoform>
        <id>O13089-5</id>
        <name>IK-5</name>
        <sequence type="described" ref="VSP_006859"/>
    </isoform>
    <isoform>
        <id>O13089-6</id>
        <name>IK-6</name>
        <sequence type="described" ref="VSP_006858"/>
    </isoform>
    <isoform>
        <id>O13089-7</id>
        <name>IK-7</name>
        <sequence type="described" ref="VSP_006862"/>
    </isoform>
    <isoform>
        <id>O13089-8</id>
        <name>IK-8</name>
        <sequence type="described" ref="VSP_006857 VSP_006862"/>
    </isoform>
</comment>
<comment type="tissue specificity">
    <text evidence="5">Expression mainly limited to thymus, spleen and pronephros. Very low expression in liver. No expression in testis, brain, eye and muscle.</text>
</comment>
<comment type="developmental stage">
    <text evidence="5">Expression begins at day 3-4 in the yolk sac and at day 5-6 in the embryo proper.</text>
</comment>
<comment type="similarity">
    <text evidence="7">Belongs to the Ikaros C2H2-type zinc-finger protein family.</text>
</comment>
<gene>
    <name type="primary">ikzf1</name>
    <name type="synonym">ikaros</name>
</gene>
<name>IKZF1_ONCMY</name>
<sequence>MEMEEAQEMSQMPGRDSPPPNDVSEENDEAMPIPEDLSASSNLQHNNRGDKEGLACNIKVEARCDEENGLAIDMMMNGEEEEECAEDLRVLDASGAKVNGSHAGGPDSKGPYSSAGGIRLPNGKLKCDICGIVCIGPNVLMVHKRSHTGERPFQCTQCGASFTQKGNLLRHIKLHSGEKPFKCHLCNYACRRRDALSGHLRTHSVGKPHKCAYCGRSYKQRSSLEEHKERCHNYLQCMGLQNSIYTVVKEESNQNEQREDLSQMGSKRALVLDRLANNVAKRKSTMPQKFVGEKRFSNISFEGGPGELMQPHVIDQAINSAINYLGAESLRPLIQTSPTSSDMGVMGSMYPLHKPPAEGHGLSAKDSAAENLLLLAKSKSASSEKDGSPSHSGQDSTDTESNNEEKAGVGASGLIYLTNHITSGVRNGVLPLVKEEQQRQYEAMRASIEIASEGFKVLSGEGEQVRAYRCEHCRILFLDHVMYTIHMGCHGFRDPFECNLCGHRSQDRYEFSSHMTRGEHRY</sequence>
<proteinExistence type="evidence at transcript level"/>
<protein>
    <recommendedName>
        <fullName>DNA-binding protein Ikaros</fullName>
    </recommendedName>
    <alternativeName>
        <fullName>Ikaros family zinc finger protein 1</fullName>
    </alternativeName>
</protein>
<dbReference type="EMBL" id="U92201">
    <property type="protein sequence ID" value="AAB97474.1"/>
    <property type="molecule type" value="mRNA"/>
</dbReference>
<dbReference type="EMBL" id="U92200">
    <property type="protein sequence ID" value="AAB53434.1"/>
    <property type="molecule type" value="mRNA"/>
</dbReference>
<dbReference type="EMBL" id="U92198">
    <property type="protein sequence ID" value="AAB53432.1"/>
    <property type="molecule type" value="mRNA"/>
</dbReference>
<dbReference type="EMBL" id="U92199">
    <property type="protein sequence ID" value="AAB53433.1"/>
    <property type="molecule type" value="mRNA"/>
</dbReference>
<dbReference type="RefSeq" id="NP_001118184.1">
    <molecule id="O13089-1"/>
    <property type="nucleotide sequence ID" value="NM_001124712.1"/>
</dbReference>
<dbReference type="SMR" id="O13089"/>
<dbReference type="Ensembl" id="ENSOMYT00000108048.2">
    <molecule id="O13089-5"/>
    <property type="protein sequence ID" value="ENSOMYP00000099558.1"/>
    <property type="gene ID" value="ENSOMYG00000044996.2"/>
</dbReference>
<dbReference type="Ensembl" id="ENSOMYT00000108051.2">
    <molecule id="O13089-6"/>
    <property type="protein sequence ID" value="ENSOMYP00000099561.1"/>
    <property type="gene ID" value="ENSOMYG00000044996.2"/>
</dbReference>
<dbReference type="GeneID" id="100136762"/>
<dbReference type="KEGG" id="omy:100136762"/>
<dbReference type="CTD" id="10320"/>
<dbReference type="GeneTree" id="ENSGT00940000156782"/>
<dbReference type="OrthoDB" id="6417347at2759"/>
<dbReference type="Proteomes" id="UP000694395">
    <property type="component" value="Chromosome 23"/>
</dbReference>
<dbReference type="GO" id="GO:0005634">
    <property type="term" value="C:nucleus"/>
    <property type="evidence" value="ECO:0000250"/>
    <property type="project" value="UniProtKB"/>
</dbReference>
<dbReference type="GO" id="GO:0003677">
    <property type="term" value="F:DNA binding"/>
    <property type="evidence" value="ECO:0000250"/>
    <property type="project" value="UniProtKB"/>
</dbReference>
<dbReference type="GO" id="GO:0003700">
    <property type="term" value="F:DNA-binding transcription factor activity"/>
    <property type="evidence" value="ECO:0007669"/>
    <property type="project" value="TreeGrafter"/>
</dbReference>
<dbReference type="GO" id="GO:0000978">
    <property type="term" value="F:RNA polymerase II cis-regulatory region sequence-specific DNA binding"/>
    <property type="evidence" value="ECO:0007669"/>
    <property type="project" value="TreeGrafter"/>
</dbReference>
<dbReference type="GO" id="GO:0008270">
    <property type="term" value="F:zinc ion binding"/>
    <property type="evidence" value="ECO:0007669"/>
    <property type="project" value="UniProtKB-KW"/>
</dbReference>
<dbReference type="GO" id="GO:0045892">
    <property type="term" value="P:negative regulation of DNA-templated transcription"/>
    <property type="evidence" value="ECO:0000250"/>
    <property type="project" value="UniProtKB"/>
</dbReference>
<dbReference type="GO" id="GO:0006357">
    <property type="term" value="P:regulation of transcription by RNA polymerase II"/>
    <property type="evidence" value="ECO:0007669"/>
    <property type="project" value="TreeGrafter"/>
</dbReference>
<dbReference type="FunFam" id="3.30.160.60:FF:000073">
    <property type="entry name" value="IKAROS family zinc finger 1"/>
    <property type="match status" value="1"/>
</dbReference>
<dbReference type="FunFam" id="3.30.160.60:FF:000265">
    <property type="entry name" value="IKAROS family zinc finger 1"/>
    <property type="match status" value="1"/>
</dbReference>
<dbReference type="FunFam" id="3.30.160.60:FF:000525">
    <property type="entry name" value="IKAROS family zinc finger 1"/>
    <property type="match status" value="1"/>
</dbReference>
<dbReference type="FunFam" id="3.30.160.60:FF:000080">
    <property type="entry name" value="IKAROS family zinc finger 4"/>
    <property type="match status" value="1"/>
</dbReference>
<dbReference type="FunFam" id="3.30.160.60:FF:000168">
    <property type="entry name" value="zinc finger protein Eos isoform X1"/>
    <property type="match status" value="1"/>
</dbReference>
<dbReference type="Gene3D" id="3.30.160.60">
    <property type="entry name" value="Classic Zinc Finger"/>
    <property type="match status" value="5"/>
</dbReference>
<dbReference type="InterPro" id="IPR050589">
    <property type="entry name" value="Ikaros_C2H2-ZF"/>
</dbReference>
<dbReference type="InterPro" id="IPR036236">
    <property type="entry name" value="Znf_C2H2_sf"/>
</dbReference>
<dbReference type="InterPro" id="IPR013087">
    <property type="entry name" value="Znf_C2H2_type"/>
</dbReference>
<dbReference type="PANTHER" id="PTHR24404:SF113">
    <property type="entry name" value="C2H2-TYPE DOMAIN-CONTAINING PROTEIN"/>
    <property type="match status" value="1"/>
</dbReference>
<dbReference type="PANTHER" id="PTHR24404">
    <property type="entry name" value="ZINC FINGER PROTEIN"/>
    <property type="match status" value="1"/>
</dbReference>
<dbReference type="Pfam" id="PF00096">
    <property type="entry name" value="zf-C2H2"/>
    <property type="match status" value="3"/>
</dbReference>
<dbReference type="SMART" id="SM00355">
    <property type="entry name" value="ZnF_C2H2"/>
    <property type="match status" value="6"/>
</dbReference>
<dbReference type="SUPFAM" id="SSF57667">
    <property type="entry name" value="beta-beta-alpha zinc fingers"/>
    <property type="match status" value="3"/>
</dbReference>
<dbReference type="PROSITE" id="PS00028">
    <property type="entry name" value="ZINC_FINGER_C2H2_1"/>
    <property type="match status" value="5"/>
</dbReference>
<dbReference type="PROSITE" id="PS50157">
    <property type="entry name" value="ZINC_FINGER_C2H2_2"/>
    <property type="match status" value="4"/>
</dbReference>
<feature type="chain" id="PRO_0000047097" description="DNA-binding protein Ikaros">
    <location>
        <begin position="1"/>
        <end position="522"/>
    </location>
</feature>
<feature type="zinc finger region" description="C2H2-type 1" evidence="3">
    <location>
        <begin position="125"/>
        <end position="147"/>
    </location>
</feature>
<feature type="zinc finger region" description="C2H2-type 2" evidence="3">
    <location>
        <begin position="153"/>
        <end position="175"/>
    </location>
</feature>
<feature type="zinc finger region" description="C2H2-type 3" evidence="3">
    <location>
        <begin position="181"/>
        <end position="203"/>
    </location>
</feature>
<feature type="zinc finger region" description="C2H2-type 4" evidence="3">
    <location>
        <begin position="209"/>
        <end position="232"/>
    </location>
</feature>
<feature type="zinc finger region" description="C2H2-type 5" evidence="3">
    <location>
        <begin position="468"/>
        <end position="490"/>
    </location>
</feature>
<feature type="zinc finger region" description="C2H2-type 6" evidence="3">
    <location>
        <begin position="496"/>
        <end position="520"/>
    </location>
</feature>
<feature type="region of interest" description="Disordered" evidence="4">
    <location>
        <begin position="1"/>
        <end position="48"/>
    </location>
</feature>
<feature type="region of interest" description="Disordered" evidence="4">
    <location>
        <begin position="96"/>
        <end position="115"/>
    </location>
</feature>
<feature type="region of interest" description="Disordered" evidence="4">
    <location>
        <begin position="379"/>
        <end position="406"/>
    </location>
</feature>
<feature type="splice variant" id="VSP_006858" description="In isoform IK-6." evidence="6">
    <location>
        <begin position="55"/>
        <end position="291"/>
    </location>
</feature>
<feature type="splice variant" id="VSP_006857" description="In isoform IK-2, isoform IK-4 and isoform IK-8." evidence="6">
    <location>
        <begin position="55"/>
        <end position="148"/>
    </location>
</feature>
<feature type="splice variant" id="VSP_006859" description="In isoform IK-5." evidence="6">
    <location>
        <begin position="149"/>
        <end position="291"/>
    </location>
</feature>
<feature type="splice variant" id="VSP_006861" description="In isoform IK-3." evidence="6">
    <location>
        <begin position="206"/>
        <end position="291"/>
    </location>
</feature>
<feature type="splice variant" id="VSP_006860" description="In isoform IK-4." evidence="6">
    <location>
        <begin position="206"/>
        <end position="246"/>
    </location>
</feature>
<feature type="splice variant" id="VSP_006862" description="In isoform IK-7 and isoform IK-8." evidence="6">
    <location>
        <begin position="247"/>
        <end position="291"/>
    </location>
</feature>
<accession>O13089</accession>
<accession>O13086</accession>
<accession>O13087</accession>
<accession>O13088</accession>
<keyword id="KW-0010">Activator</keyword>
<keyword id="KW-0025">Alternative splicing</keyword>
<keyword id="KW-0217">Developmental protein</keyword>
<keyword id="KW-0238">DNA-binding</keyword>
<keyword id="KW-0479">Metal-binding</keyword>
<keyword id="KW-0539">Nucleus</keyword>
<keyword id="KW-0677">Repeat</keyword>
<keyword id="KW-0804">Transcription</keyword>
<keyword id="KW-0805">Transcription regulation</keyword>
<keyword id="KW-0862">Zinc</keyword>
<keyword id="KW-0863">Zinc-finger</keyword>